<sequence>MAAQGFLLIASFLLILLVLAKPLGSGLARLIAAVPLPGVAGVERILWRTLGITDHEMNWRQYLLALLTLNLLGLGILFCLLFWQEWLPLNPQRLPGLSWDLALNTAVSFVTNTNWQAYSGESTLSYFSQMAGLTVQNFLSAATGIAVVFALIRAFTRQNVHTLGNAWQDLVRITLWILFPVALIIALFFIQQGVPQNLSAYQPITTLEGAKQLLPMGPVASQEAIKMLGTNGGGFFNANSSHPFENPTALTNLAQMLAIFLIPAALCFAFGEAAGDRRQGRALLWAMSFIFVVCVAVVMWAEVQGNPHLLAAGADSSVNMEGKETRFGVLASSLFAVVTTAASCGAVNAMHDSFTALGGMVPMWLMQIGEVVFGGVGSGLYGMLLFVLLAVFIAGLMIGRTPEYLGKKIDVREMKMTALAILVTPMLVLLGSALAMMTDAGRSAMLNPGPHGFSEVLYAVSSAANNNGSAFAGLSANSPFWNCLLAFCMFVGRFGVIIPVMAIAGSLVSKKVQPASQGTLATHGALFIGLLIGTVLLVGALTFIPALALGPVAEHFSLP</sequence>
<accession>Q5PCJ8</accession>
<proteinExistence type="inferred from homology"/>
<gene>
    <name evidence="1" type="primary">kdpA</name>
    <name type="ordered locus">SPA2035</name>
</gene>
<reference key="1">
    <citation type="journal article" date="2004" name="Nat. Genet.">
        <title>Comparison of genome degradation in Paratyphi A and Typhi, human-restricted serovars of Salmonella enterica that cause typhoid.</title>
        <authorList>
            <person name="McClelland M."/>
            <person name="Sanderson K.E."/>
            <person name="Clifton S.W."/>
            <person name="Latreille P."/>
            <person name="Porwollik S."/>
            <person name="Sabo A."/>
            <person name="Meyer R."/>
            <person name="Bieri T."/>
            <person name="Ozersky P."/>
            <person name="McLellan M."/>
            <person name="Harkins C.R."/>
            <person name="Wang C."/>
            <person name="Nguyen C."/>
            <person name="Berghoff A."/>
            <person name="Elliott G."/>
            <person name="Kohlberg S."/>
            <person name="Strong C."/>
            <person name="Du F."/>
            <person name="Carter J."/>
            <person name="Kremizki C."/>
            <person name="Layman D."/>
            <person name="Leonard S."/>
            <person name="Sun H."/>
            <person name="Fulton L."/>
            <person name="Nash W."/>
            <person name="Miner T."/>
            <person name="Minx P."/>
            <person name="Delehaunty K."/>
            <person name="Fronick C."/>
            <person name="Magrini V."/>
            <person name="Nhan M."/>
            <person name="Warren W."/>
            <person name="Florea L."/>
            <person name="Spieth J."/>
            <person name="Wilson R.K."/>
        </authorList>
    </citation>
    <scope>NUCLEOTIDE SEQUENCE [LARGE SCALE GENOMIC DNA]</scope>
    <source>
        <strain>ATCC 9150 / SARB42</strain>
    </source>
</reference>
<protein>
    <recommendedName>
        <fullName evidence="1">Potassium-transporting ATPase potassium-binding subunit</fullName>
    </recommendedName>
    <alternativeName>
        <fullName evidence="1">ATP phosphohydrolase [potassium-transporting] A chain</fullName>
    </alternativeName>
    <alternativeName>
        <fullName evidence="1">Potassium-binding and translocating subunit A</fullName>
    </alternativeName>
    <alternativeName>
        <fullName evidence="1">Potassium-translocating ATPase A chain</fullName>
    </alternativeName>
</protein>
<feature type="chain" id="PRO_0000166520" description="Potassium-transporting ATPase potassium-binding subunit">
    <location>
        <begin position="1"/>
        <end position="559"/>
    </location>
</feature>
<feature type="transmembrane region" description="Helical" evidence="1">
    <location>
        <begin position="5"/>
        <end position="25"/>
    </location>
</feature>
<feature type="transmembrane region" description="Helical" evidence="1">
    <location>
        <begin position="27"/>
        <end position="47"/>
    </location>
</feature>
<feature type="transmembrane region" description="Helical" evidence="1">
    <location>
        <begin position="63"/>
        <end position="83"/>
    </location>
</feature>
<feature type="transmembrane region" description="Helical" evidence="1">
    <location>
        <begin position="132"/>
        <end position="152"/>
    </location>
</feature>
<feature type="transmembrane region" description="Helical" evidence="1">
    <location>
        <begin position="170"/>
        <end position="190"/>
    </location>
</feature>
<feature type="transmembrane region" description="Helical" evidence="1">
    <location>
        <begin position="253"/>
        <end position="273"/>
    </location>
</feature>
<feature type="transmembrane region" description="Helical" evidence="1">
    <location>
        <begin position="283"/>
        <end position="303"/>
    </location>
</feature>
<feature type="transmembrane region" description="Helical" evidence="1">
    <location>
        <begin position="327"/>
        <end position="347"/>
    </location>
</feature>
<feature type="transmembrane region" description="Helical" evidence="1">
    <location>
        <begin position="356"/>
        <end position="376"/>
    </location>
</feature>
<feature type="transmembrane region" description="Helical" evidence="1">
    <location>
        <begin position="379"/>
        <end position="399"/>
    </location>
</feature>
<feature type="transmembrane region" description="Helical" evidence="1">
    <location>
        <begin position="416"/>
        <end position="436"/>
    </location>
</feature>
<feature type="transmembrane region" description="Helical" evidence="1">
    <location>
        <begin position="484"/>
        <end position="504"/>
    </location>
</feature>
<feature type="transmembrane region" description="Helical" evidence="1">
    <location>
        <begin position="524"/>
        <end position="544"/>
    </location>
</feature>
<organism>
    <name type="scientific">Salmonella paratyphi A (strain ATCC 9150 / SARB42)</name>
    <dbReference type="NCBI Taxonomy" id="295319"/>
    <lineage>
        <taxon>Bacteria</taxon>
        <taxon>Pseudomonadati</taxon>
        <taxon>Pseudomonadota</taxon>
        <taxon>Gammaproteobacteria</taxon>
        <taxon>Enterobacterales</taxon>
        <taxon>Enterobacteriaceae</taxon>
        <taxon>Salmonella</taxon>
    </lineage>
</organism>
<name>KDPA_SALPA</name>
<keyword id="KW-0997">Cell inner membrane</keyword>
<keyword id="KW-1003">Cell membrane</keyword>
<keyword id="KW-0406">Ion transport</keyword>
<keyword id="KW-0472">Membrane</keyword>
<keyword id="KW-0630">Potassium</keyword>
<keyword id="KW-0633">Potassium transport</keyword>
<keyword id="KW-0812">Transmembrane</keyword>
<keyword id="KW-1133">Transmembrane helix</keyword>
<keyword id="KW-0813">Transport</keyword>
<dbReference type="EMBL" id="CP000026">
    <property type="protein sequence ID" value="AAV77937.1"/>
    <property type="molecule type" value="Genomic_DNA"/>
</dbReference>
<dbReference type="RefSeq" id="WP_000730078.1">
    <property type="nucleotide sequence ID" value="NC_006511.1"/>
</dbReference>
<dbReference type="SMR" id="Q5PCJ8"/>
<dbReference type="KEGG" id="spt:SPA2035"/>
<dbReference type="HOGENOM" id="CLU_018614_3_0_6"/>
<dbReference type="Proteomes" id="UP000008185">
    <property type="component" value="Chromosome"/>
</dbReference>
<dbReference type="GO" id="GO:0005886">
    <property type="term" value="C:plasma membrane"/>
    <property type="evidence" value="ECO:0007669"/>
    <property type="project" value="UniProtKB-SubCell"/>
</dbReference>
<dbReference type="GO" id="GO:0008556">
    <property type="term" value="F:P-type potassium transmembrane transporter activity"/>
    <property type="evidence" value="ECO:0007669"/>
    <property type="project" value="InterPro"/>
</dbReference>
<dbReference type="GO" id="GO:0030955">
    <property type="term" value="F:potassium ion binding"/>
    <property type="evidence" value="ECO:0007669"/>
    <property type="project" value="UniProtKB-UniRule"/>
</dbReference>
<dbReference type="HAMAP" id="MF_00275">
    <property type="entry name" value="KdpA"/>
    <property type="match status" value="1"/>
</dbReference>
<dbReference type="InterPro" id="IPR004623">
    <property type="entry name" value="KdpA"/>
</dbReference>
<dbReference type="NCBIfam" id="TIGR00680">
    <property type="entry name" value="kdpA"/>
    <property type="match status" value="1"/>
</dbReference>
<dbReference type="PANTHER" id="PTHR30607">
    <property type="entry name" value="POTASSIUM-TRANSPORTING ATPASE A CHAIN"/>
    <property type="match status" value="1"/>
</dbReference>
<dbReference type="PANTHER" id="PTHR30607:SF2">
    <property type="entry name" value="POTASSIUM-TRANSPORTING ATPASE POTASSIUM-BINDING SUBUNIT"/>
    <property type="match status" value="1"/>
</dbReference>
<dbReference type="Pfam" id="PF03814">
    <property type="entry name" value="KdpA"/>
    <property type="match status" value="1"/>
</dbReference>
<dbReference type="PIRSF" id="PIRSF001294">
    <property type="entry name" value="K_ATPaseA"/>
    <property type="match status" value="1"/>
</dbReference>
<evidence type="ECO:0000255" key="1">
    <source>
        <dbReference type="HAMAP-Rule" id="MF_00275"/>
    </source>
</evidence>
<comment type="function">
    <text evidence="1">Part of the high-affinity ATP-driven potassium transport (or Kdp) system, which catalyzes the hydrolysis of ATP coupled with the electrogenic transport of potassium into the cytoplasm. This subunit binds the periplasmic potassium ions and delivers the ions to the membrane domain of KdpB through an intramembrane tunnel.</text>
</comment>
<comment type="subunit">
    <text evidence="1">The system is composed of three essential subunits: KdpA, KdpB and KdpC.</text>
</comment>
<comment type="subcellular location">
    <subcellularLocation>
        <location evidence="1">Cell inner membrane</location>
        <topology evidence="1">Multi-pass membrane protein</topology>
    </subcellularLocation>
</comment>
<comment type="similarity">
    <text evidence="1">Belongs to the KdpA family.</text>
</comment>